<organism>
    <name type="scientific">Lacticaseibacillus casei (strain BL23)</name>
    <name type="common">Lactobacillus casei</name>
    <dbReference type="NCBI Taxonomy" id="543734"/>
    <lineage>
        <taxon>Bacteria</taxon>
        <taxon>Bacillati</taxon>
        <taxon>Bacillota</taxon>
        <taxon>Bacilli</taxon>
        <taxon>Lactobacillales</taxon>
        <taxon>Lactobacillaceae</taxon>
        <taxon>Lacticaseibacillus</taxon>
    </lineage>
</organism>
<reference key="1">
    <citation type="submission" date="2008-06" db="EMBL/GenBank/DDBJ databases">
        <title>Lactobacillus casei BL23 complete genome sequence.</title>
        <authorList>
            <person name="Maze A."/>
            <person name="Boel G."/>
            <person name="Bourand A."/>
            <person name="Loux V."/>
            <person name="Gibrat J.F."/>
            <person name="Zuniga M."/>
            <person name="Hartke A."/>
            <person name="Deutscher J."/>
        </authorList>
    </citation>
    <scope>NUCLEOTIDE SEQUENCE [LARGE SCALE GENOMIC DNA]</scope>
    <source>
        <strain>BL23</strain>
    </source>
</reference>
<dbReference type="EMBL" id="FM177140">
    <property type="protein sequence ID" value="CAQ66782.1"/>
    <property type="molecule type" value="Genomic_DNA"/>
</dbReference>
<dbReference type="SMR" id="B3WEI1"/>
<dbReference type="KEGG" id="lcb:LCABL_17010"/>
<dbReference type="HOGENOM" id="CLU_105319_0_0_9"/>
<dbReference type="Gene3D" id="3.40.50.450">
    <property type="match status" value="1"/>
</dbReference>
<dbReference type="HAMAP" id="MF_01575">
    <property type="entry name" value="UPF0398"/>
    <property type="match status" value="1"/>
</dbReference>
<dbReference type="InterPro" id="IPR010697">
    <property type="entry name" value="YspA"/>
</dbReference>
<dbReference type="NCBIfam" id="NF010181">
    <property type="entry name" value="PRK13660.1"/>
    <property type="match status" value="1"/>
</dbReference>
<dbReference type="PANTHER" id="PTHR38440:SF1">
    <property type="entry name" value="UPF0398 PROTEIN SPR0331"/>
    <property type="match status" value="1"/>
</dbReference>
<dbReference type="PANTHER" id="PTHR38440">
    <property type="entry name" value="UPF0398 PROTEIN YPSA"/>
    <property type="match status" value="1"/>
</dbReference>
<dbReference type="Pfam" id="PF06908">
    <property type="entry name" value="YpsA"/>
    <property type="match status" value="1"/>
</dbReference>
<dbReference type="PIRSF" id="PIRSF021290">
    <property type="entry name" value="DUF1273"/>
    <property type="match status" value="1"/>
</dbReference>
<dbReference type="SUPFAM" id="SSF102405">
    <property type="entry name" value="MCP/YpsA-like"/>
    <property type="match status" value="1"/>
</dbReference>
<evidence type="ECO:0000255" key="1">
    <source>
        <dbReference type="HAMAP-Rule" id="MF_01575"/>
    </source>
</evidence>
<feature type="chain" id="PRO_0000382546" description="UPF0398 protein LCABL_17010">
    <location>
        <begin position="1"/>
        <end position="191"/>
    </location>
</feature>
<sequence>MVGKRLWVTGYRAYELNVFGSNDPKLKVLKTSLKNTLMQFLDEGLEWLITGGQLGVEQWAVEVALGLKPLYPDFKIAMMVPFTDFGKQWNEDNQGQLAALRGQVDFSDAVSQAPYQQPAQLQGYTRFMTIHTDAALLVYDPEFPGKAKWDYQAAEAMADRRDYPVQLITMDDLEETAQAMAEAENEHFQND</sequence>
<comment type="similarity">
    <text evidence="1">Belongs to the UPF0398 family.</text>
</comment>
<accession>B3WEI1</accession>
<gene>
    <name type="ordered locus">LCABL_17010</name>
</gene>
<name>Y1701_LACCB</name>
<protein>
    <recommendedName>
        <fullName evidence="1">UPF0398 protein LCABL_17010</fullName>
    </recommendedName>
</protein>
<proteinExistence type="inferred from homology"/>